<feature type="chain" id="PRO_0000165566" description="Holliday junction branch migration complex subunit RuvB">
    <location>
        <begin position="1"/>
        <end position="346"/>
    </location>
</feature>
<feature type="region of interest" description="Large ATPase domain (RuvB-L)" evidence="1">
    <location>
        <begin position="4"/>
        <end position="185"/>
    </location>
</feature>
<feature type="region of interest" description="Small ATPAse domain (RuvB-S)" evidence="1">
    <location>
        <begin position="186"/>
        <end position="256"/>
    </location>
</feature>
<feature type="region of interest" description="Head domain (RuvB-H)" evidence="1">
    <location>
        <begin position="259"/>
        <end position="346"/>
    </location>
</feature>
<feature type="binding site" evidence="1">
    <location>
        <position position="24"/>
    </location>
    <ligand>
        <name>ATP</name>
        <dbReference type="ChEBI" id="CHEBI:30616"/>
    </ligand>
</feature>
<feature type="binding site" evidence="1">
    <location>
        <position position="25"/>
    </location>
    <ligand>
        <name>ATP</name>
        <dbReference type="ChEBI" id="CHEBI:30616"/>
    </ligand>
</feature>
<feature type="binding site" evidence="1">
    <location>
        <position position="66"/>
    </location>
    <ligand>
        <name>ATP</name>
        <dbReference type="ChEBI" id="CHEBI:30616"/>
    </ligand>
</feature>
<feature type="binding site" evidence="1">
    <location>
        <position position="69"/>
    </location>
    <ligand>
        <name>ATP</name>
        <dbReference type="ChEBI" id="CHEBI:30616"/>
    </ligand>
</feature>
<feature type="binding site" evidence="1">
    <location>
        <position position="70"/>
    </location>
    <ligand>
        <name>ATP</name>
        <dbReference type="ChEBI" id="CHEBI:30616"/>
    </ligand>
</feature>
<feature type="binding site" evidence="1">
    <location>
        <position position="70"/>
    </location>
    <ligand>
        <name>Mg(2+)</name>
        <dbReference type="ChEBI" id="CHEBI:18420"/>
    </ligand>
</feature>
<feature type="binding site" evidence="1">
    <location>
        <position position="71"/>
    </location>
    <ligand>
        <name>ATP</name>
        <dbReference type="ChEBI" id="CHEBI:30616"/>
    </ligand>
</feature>
<feature type="binding site" evidence="1">
    <location>
        <begin position="132"/>
        <end position="134"/>
    </location>
    <ligand>
        <name>ATP</name>
        <dbReference type="ChEBI" id="CHEBI:30616"/>
    </ligand>
</feature>
<feature type="binding site" evidence="1">
    <location>
        <position position="175"/>
    </location>
    <ligand>
        <name>ATP</name>
        <dbReference type="ChEBI" id="CHEBI:30616"/>
    </ligand>
</feature>
<feature type="binding site" evidence="1">
    <location>
        <position position="185"/>
    </location>
    <ligand>
        <name>ATP</name>
        <dbReference type="ChEBI" id="CHEBI:30616"/>
    </ligand>
</feature>
<feature type="binding site" evidence="1">
    <location>
        <position position="222"/>
    </location>
    <ligand>
        <name>ATP</name>
        <dbReference type="ChEBI" id="CHEBI:30616"/>
    </ligand>
</feature>
<feature type="binding site" evidence="1">
    <location>
        <position position="295"/>
    </location>
    <ligand>
        <name>DNA</name>
        <dbReference type="ChEBI" id="CHEBI:16991"/>
    </ligand>
</feature>
<feature type="binding site" evidence="1">
    <location>
        <position position="314"/>
    </location>
    <ligand>
        <name>DNA</name>
        <dbReference type="ChEBI" id="CHEBI:16991"/>
    </ligand>
</feature>
<feature type="binding site" evidence="1">
    <location>
        <position position="319"/>
    </location>
    <ligand>
        <name>DNA</name>
        <dbReference type="ChEBI" id="CHEBI:16991"/>
    </ligand>
</feature>
<comment type="function">
    <text evidence="1">The RuvA-RuvB-RuvC complex processes Holliday junction (HJ) DNA during genetic recombination and DNA repair, while the RuvA-RuvB complex plays an important role in the rescue of blocked DNA replication forks via replication fork reversal (RFR). RuvA specifically binds to HJ cruciform DNA, conferring on it an open structure. The RuvB hexamer acts as an ATP-dependent pump, pulling dsDNA into and through the RuvAB complex. RuvB forms 2 homohexamers on either side of HJ DNA bound by 1 or 2 RuvA tetramers; 4 subunits per hexamer contact DNA at a time. Coordinated motions by a converter formed by DNA-disengaged RuvB subunits stimulates ATP hydrolysis and nucleotide exchange. Immobilization of the converter enables RuvB to convert the ATP-contained energy into a lever motion, pulling 2 nucleotides of DNA out of the RuvA tetramer per ATP hydrolyzed, thus driving DNA branch migration. The RuvB motors rotate together with the DNA substrate, which together with the progressing nucleotide cycle form the mechanistic basis for DNA recombination by continuous HJ branch migration. Branch migration allows RuvC to scan DNA until it finds its consensus sequence, where it cleaves and resolves cruciform DNA.</text>
</comment>
<comment type="catalytic activity">
    <reaction evidence="1">
        <text>ATP + H2O = ADP + phosphate + H(+)</text>
        <dbReference type="Rhea" id="RHEA:13065"/>
        <dbReference type="ChEBI" id="CHEBI:15377"/>
        <dbReference type="ChEBI" id="CHEBI:15378"/>
        <dbReference type="ChEBI" id="CHEBI:30616"/>
        <dbReference type="ChEBI" id="CHEBI:43474"/>
        <dbReference type="ChEBI" id="CHEBI:456216"/>
    </reaction>
</comment>
<comment type="subunit">
    <text evidence="1">Homohexamer. Forms an RuvA(8)-RuvB(12)-Holliday junction (HJ) complex. HJ DNA is sandwiched between 2 RuvA tetramers; dsDNA enters through RuvA and exits via RuvB. An RuvB hexamer assembles on each DNA strand where it exits the tetramer. Each RuvB hexamer is contacted by two RuvA subunits (via domain III) on 2 adjacent RuvB subunits; this complex drives branch migration. In the full resolvosome a probable DNA-RuvA(4)-RuvB(12)-RuvC(2) complex forms which resolves the HJ.</text>
</comment>
<comment type="subcellular location">
    <subcellularLocation>
        <location evidence="1">Cytoplasm</location>
    </subcellularLocation>
</comment>
<comment type="domain">
    <text evidence="1">Has 3 domains, the large (RuvB-L) and small ATPase (RuvB-S) domains and the C-terminal head (RuvB-H) domain. The head domain binds DNA, while the ATPase domains jointly bind ATP, ADP or are empty depending on the state of the subunit in the translocation cycle. During a single DNA translocation step the structure of each domain remains the same, but their relative positions change.</text>
</comment>
<comment type="similarity">
    <text evidence="1">Belongs to the RuvB family.</text>
</comment>
<dbReference type="EC" id="3.6.4.-" evidence="1"/>
<dbReference type="EMBL" id="AL954747">
    <property type="protein sequence ID" value="CAD84124.1"/>
    <property type="molecule type" value="Genomic_DNA"/>
</dbReference>
<dbReference type="RefSeq" id="WP_011110858.1">
    <property type="nucleotide sequence ID" value="NC_004757.1"/>
</dbReference>
<dbReference type="SMR" id="Q82XP4"/>
<dbReference type="STRING" id="228410.NE0213"/>
<dbReference type="GeneID" id="87103420"/>
<dbReference type="KEGG" id="neu:NE0213"/>
<dbReference type="eggNOG" id="COG2255">
    <property type="taxonomic scope" value="Bacteria"/>
</dbReference>
<dbReference type="HOGENOM" id="CLU_055599_1_0_4"/>
<dbReference type="OrthoDB" id="9804478at2"/>
<dbReference type="PhylomeDB" id="Q82XP4"/>
<dbReference type="Proteomes" id="UP000001416">
    <property type="component" value="Chromosome"/>
</dbReference>
<dbReference type="GO" id="GO:0005737">
    <property type="term" value="C:cytoplasm"/>
    <property type="evidence" value="ECO:0007669"/>
    <property type="project" value="UniProtKB-SubCell"/>
</dbReference>
<dbReference type="GO" id="GO:0048476">
    <property type="term" value="C:Holliday junction resolvase complex"/>
    <property type="evidence" value="ECO:0007669"/>
    <property type="project" value="UniProtKB-UniRule"/>
</dbReference>
<dbReference type="GO" id="GO:0005524">
    <property type="term" value="F:ATP binding"/>
    <property type="evidence" value="ECO:0007669"/>
    <property type="project" value="UniProtKB-UniRule"/>
</dbReference>
<dbReference type="GO" id="GO:0016887">
    <property type="term" value="F:ATP hydrolysis activity"/>
    <property type="evidence" value="ECO:0007669"/>
    <property type="project" value="InterPro"/>
</dbReference>
<dbReference type="GO" id="GO:0000400">
    <property type="term" value="F:four-way junction DNA binding"/>
    <property type="evidence" value="ECO:0007669"/>
    <property type="project" value="UniProtKB-UniRule"/>
</dbReference>
<dbReference type="GO" id="GO:0009378">
    <property type="term" value="F:four-way junction helicase activity"/>
    <property type="evidence" value="ECO:0007669"/>
    <property type="project" value="InterPro"/>
</dbReference>
<dbReference type="GO" id="GO:0006310">
    <property type="term" value="P:DNA recombination"/>
    <property type="evidence" value="ECO:0007669"/>
    <property type="project" value="UniProtKB-UniRule"/>
</dbReference>
<dbReference type="GO" id="GO:0006281">
    <property type="term" value="P:DNA repair"/>
    <property type="evidence" value="ECO:0007669"/>
    <property type="project" value="UniProtKB-UniRule"/>
</dbReference>
<dbReference type="CDD" id="cd00009">
    <property type="entry name" value="AAA"/>
    <property type="match status" value="1"/>
</dbReference>
<dbReference type="FunFam" id="1.10.10.10:FF:000086">
    <property type="entry name" value="Holliday junction ATP-dependent DNA helicase RuvB"/>
    <property type="match status" value="1"/>
</dbReference>
<dbReference type="FunFam" id="3.40.50.300:FF:000073">
    <property type="entry name" value="Holliday junction ATP-dependent DNA helicase RuvB"/>
    <property type="match status" value="1"/>
</dbReference>
<dbReference type="Gene3D" id="1.10.8.60">
    <property type="match status" value="1"/>
</dbReference>
<dbReference type="Gene3D" id="3.40.50.300">
    <property type="entry name" value="P-loop containing nucleotide triphosphate hydrolases"/>
    <property type="match status" value="1"/>
</dbReference>
<dbReference type="Gene3D" id="1.10.10.10">
    <property type="entry name" value="Winged helix-like DNA-binding domain superfamily/Winged helix DNA-binding domain"/>
    <property type="match status" value="1"/>
</dbReference>
<dbReference type="HAMAP" id="MF_00016">
    <property type="entry name" value="DNA_HJ_migration_RuvB"/>
    <property type="match status" value="1"/>
</dbReference>
<dbReference type="InterPro" id="IPR003593">
    <property type="entry name" value="AAA+_ATPase"/>
</dbReference>
<dbReference type="InterPro" id="IPR041445">
    <property type="entry name" value="AAA_lid_4"/>
</dbReference>
<dbReference type="InterPro" id="IPR004605">
    <property type="entry name" value="DNA_helicase_Holl-junc_RuvB"/>
</dbReference>
<dbReference type="InterPro" id="IPR027417">
    <property type="entry name" value="P-loop_NTPase"/>
</dbReference>
<dbReference type="InterPro" id="IPR008824">
    <property type="entry name" value="RuvB-like_N"/>
</dbReference>
<dbReference type="InterPro" id="IPR008823">
    <property type="entry name" value="RuvB_C"/>
</dbReference>
<dbReference type="InterPro" id="IPR036388">
    <property type="entry name" value="WH-like_DNA-bd_sf"/>
</dbReference>
<dbReference type="InterPro" id="IPR036390">
    <property type="entry name" value="WH_DNA-bd_sf"/>
</dbReference>
<dbReference type="NCBIfam" id="NF000868">
    <property type="entry name" value="PRK00080.1"/>
    <property type="match status" value="1"/>
</dbReference>
<dbReference type="NCBIfam" id="TIGR00635">
    <property type="entry name" value="ruvB"/>
    <property type="match status" value="1"/>
</dbReference>
<dbReference type="PANTHER" id="PTHR42848">
    <property type="match status" value="1"/>
</dbReference>
<dbReference type="PANTHER" id="PTHR42848:SF1">
    <property type="entry name" value="HOLLIDAY JUNCTION BRANCH MIGRATION COMPLEX SUBUNIT RUVB"/>
    <property type="match status" value="1"/>
</dbReference>
<dbReference type="Pfam" id="PF17864">
    <property type="entry name" value="AAA_lid_4"/>
    <property type="match status" value="1"/>
</dbReference>
<dbReference type="Pfam" id="PF05491">
    <property type="entry name" value="RuvB_C"/>
    <property type="match status" value="1"/>
</dbReference>
<dbReference type="Pfam" id="PF05496">
    <property type="entry name" value="RuvB_N"/>
    <property type="match status" value="1"/>
</dbReference>
<dbReference type="SMART" id="SM00382">
    <property type="entry name" value="AAA"/>
    <property type="match status" value="1"/>
</dbReference>
<dbReference type="SUPFAM" id="SSF52540">
    <property type="entry name" value="P-loop containing nucleoside triphosphate hydrolases"/>
    <property type="match status" value="1"/>
</dbReference>
<dbReference type="SUPFAM" id="SSF46785">
    <property type="entry name" value="Winged helix' DNA-binding domain"/>
    <property type="match status" value="1"/>
</dbReference>
<proteinExistence type="inferred from homology"/>
<accession>Q82XP4</accession>
<gene>
    <name evidence="1" type="primary">ruvB</name>
    <name type="ordered locus">NE0213</name>
</gene>
<protein>
    <recommendedName>
        <fullName evidence="1">Holliday junction branch migration complex subunit RuvB</fullName>
        <ecNumber evidence="1">3.6.4.-</ecNumber>
    </recommendedName>
</protein>
<keyword id="KW-0067">ATP-binding</keyword>
<keyword id="KW-0963">Cytoplasm</keyword>
<keyword id="KW-0227">DNA damage</keyword>
<keyword id="KW-0233">DNA recombination</keyword>
<keyword id="KW-0234">DNA repair</keyword>
<keyword id="KW-0238">DNA-binding</keyword>
<keyword id="KW-0378">Hydrolase</keyword>
<keyword id="KW-0547">Nucleotide-binding</keyword>
<keyword id="KW-1185">Reference proteome</keyword>
<organism>
    <name type="scientific">Nitrosomonas europaea (strain ATCC 19718 / CIP 103999 / KCTC 2705 / NBRC 14298)</name>
    <dbReference type="NCBI Taxonomy" id="228410"/>
    <lineage>
        <taxon>Bacteria</taxon>
        <taxon>Pseudomonadati</taxon>
        <taxon>Pseudomonadota</taxon>
        <taxon>Betaproteobacteria</taxon>
        <taxon>Nitrosomonadales</taxon>
        <taxon>Nitrosomonadaceae</taxon>
        <taxon>Nitrosomonas</taxon>
    </lineage>
</organism>
<evidence type="ECO:0000255" key="1">
    <source>
        <dbReference type="HAMAP-Rule" id="MF_00016"/>
    </source>
</evidence>
<name>RUVB_NITEU</name>
<reference key="1">
    <citation type="journal article" date="2003" name="J. Bacteriol.">
        <title>Complete genome sequence of the ammonia-oxidizing bacterium and obligate chemolithoautotroph Nitrosomonas europaea.</title>
        <authorList>
            <person name="Chain P."/>
            <person name="Lamerdin J.E."/>
            <person name="Larimer F.W."/>
            <person name="Regala W."/>
            <person name="Lao V."/>
            <person name="Land M.L."/>
            <person name="Hauser L."/>
            <person name="Hooper A.B."/>
            <person name="Klotz M.G."/>
            <person name="Norton J."/>
            <person name="Sayavedra-Soto L.A."/>
            <person name="Arciero D.M."/>
            <person name="Hommes N.G."/>
            <person name="Whittaker M.M."/>
            <person name="Arp D.J."/>
        </authorList>
    </citation>
    <scope>NUCLEOTIDE SEQUENCE [LARGE SCALE GENOMIC DNA]</scope>
    <source>
        <strain>ATCC 19718 / CIP 103999 / KCTC 2705 / NBRC 14298</strain>
    </source>
</reference>
<sequence>MIESDRIITASPFSSQEEVIERALRPVQLDDYVGQEKIREQLKIFIEAARLRQEALDHVLLFGPPGLGKTTLAHIIAREMGVNLRQTSGPVLERAGDLAALLTNLETNDVLFIDEIHRLSPVVEEILYPAMEDYQLDIMIGEGAAARSVKIDLPSFTLVGATTRAGMLTNPLRDRFGIVSRLEFYTADELGKIVTRSAGLLNVDVTADGAREIACRSRGTPRIANRLLRRVRDFAEVRANGRIDRPVADAALQMLDVDATGLDVLDRKLLLAVLEKFGGGPVGVDNLAAAINEERDTIEEVLEPYLIQQGFLQRTPRGRMATTMAYQHFDIIPSHQTTVPSLFDPD</sequence>